<comment type="function">
    <text evidence="1">Involved in the binding of tRNA to the ribosomes.</text>
</comment>
<comment type="subunit">
    <text evidence="1">Part of the 30S ribosomal subunit.</text>
</comment>
<comment type="similarity">
    <text evidence="1">Belongs to the universal ribosomal protein uS10 family.</text>
</comment>
<organism>
    <name type="scientific">Rhizobium etli (strain ATCC 51251 / DSM 11541 / JCM 21823 / NBRC 15573 / CFN 42)</name>
    <dbReference type="NCBI Taxonomy" id="347834"/>
    <lineage>
        <taxon>Bacteria</taxon>
        <taxon>Pseudomonadati</taxon>
        <taxon>Pseudomonadota</taxon>
        <taxon>Alphaproteobacteria</taxon>
        <taxon>Hyphomicrobiales</taxon>
        <taxon>Rhizobiaceae</taxon>
        <taxon>Rhizobium/Agrobacterium group</taxon>
        <taxon>Rhizobium</taxon>
    </lineage>
</organism>
<name>RS10_RHIEC</name>
<accession>Q2K9L7</accession>
<evidence type="ECO:0000255" key="1">
    <source>
        <dbReference type="HAMAP-Rule" id="MF_00508"/>
    </source>
</evidence>
<evidence type="ECO:0000305" key="2"/>
<protein>
    <recommendedName>
        <fullName evidence="1">Small ribosomal subunit protein uS10</fullName>
    </recommendedName>
    <alternativeName>
        <fullName evidence="2">30S ribosomal protein S10</fullName>
    </alternativeName>
</protein>
<gene>
    <name evidence="1" type="primary">rpsJ</name>
    <name type="ordered locus">RHE_CH01674</name>
</gene>
<dbReference type="EMBL" id="CP000133">
    <property type="protein sequence ID" value="ABC90469.1"/>
    <property type="molecule type" value="Genomic_DNA"/>
</dbReference>
<dbReference type="RefSeq" id="WP_003547547.1">
    <property type="nucleotide sequence ID" value="NC_007761.1"/>
</dbReference>
<dbReference type="SMR" id="Q2K9L7"/>
<dbReference type="GeneID" id="91148127"/>
<dbReference type="KEGG" id="ret:RHE_CH01674"/>
<dbReference type="eggNOG" id="COG0051">
    <property type="taxonomic scope" value="Bacteria"/>
</dbReference>
<dbReference type="HOGENOM" id="CLU_122625_1_3_5"/>
<dbReference type="OrthoDB" id="9804464at2"/>
<dbReference type="Proteomes" id="UP000001936">
    <property type="component" value="Chromosome"/>
</dbReference>
<dbReference type="GO" id="GO:1990904">
    <property type="term" value="C:ribonucleoprotein complex"/>
    <property type="evidence" value="ECO:0007669"/>
    <property type="project" value="UniProtKB-KW"/>
</dbReference>
<dbReference type="GO" id="GO:0005840">
    <property type="term" value="C:ribosome"/>
    <property type="evidence" value="ECO:0007669"/>
    <property type="project" value="UniProtKB-KW"/>
</dbReference>
<dbReference type="GO" id="GO:0003735">
    <property type="term" value="F:structural constituent of ribosome"/>
    <property type="evidence" value="ECO:0007669"/>
    <property type="project" value="InterPro"/>
</dbReference>
<dbReference type="GO" id="GO:0000049">
    <property type="term" value="F:tRNA binding"/>
    <property type="evidence" value="ECO:0007669"/>
    <property type="project" value="UniProtKB-UniRule"/>
</dbReference>
<dbReference type="GO" id="GO:0006412">
    <property type="term" value="P:translation"/>
    <property type="evidence" value="ECO:0007669"/>
    <property type="project" value="UniProtKB-UniRule"/>
</dbReference>
<dbReference type="FunFam" id="3.30.70.600:FF:000001">
    <property type="entry name" value="30S ribosomal protein S10"/>
    <property type="match status" value="1"/>
</dbReference>
<dbReference type="Gene3D" id="3.30.70.600">
    <property type="entry name" value="Ribosomal protein S10 domain"/>
    <property type="match status" value="1"/>
</dbReference>
<dbReference type="HAMAP" id="MF_00508">
    <property type="entry name" value="Ribosomal_uS10"/>
    <property type="match status" value="1"/>
</dbReference>
<dbReference type="InterPro" id="IPR001848">
    <property type="entry name" value="Ribosomal_uS10"/>
</dbReference>
<dbReference type="InterPro" id="IPR018268">
    <property type="entry name" value="Ribosomal_uS10_CS"/>
</dbReference>
<dbReference type="InterPro" id="IPR027486">
    <property type="entry name" value="Ribosomal_uS10_dom"/>
</dbReference>
<dbReference type="InterPro" id="IPR036838">
    <property type="entry name" value="Ribosomal_uS10_dom_sf"/>
</dbReference>
<dbReference type="NCBIfam" id="NF001861">
    <property type="entry name" value="PRK00596.1"/>
    <property type="match status" value="1"/>
</dbReference>
<dbReference type="NCBIfam" id="TIGR01049">
    <property type="entry name" value="rpsJ_bact"/>
    <property type="match status" value="1"/>
</dbReference>
<dbReference type="PANTHER" id="PTHR11700">
    <property type="entry name" value="30S RIBOSOMAL PROTEIN S10 FAMILY MEMBER"/>
    <property type="match status" value="1"/>
</dbReference>
<dbReference type="Pfam" id="PF00338">
    <property type="entry name" value="Ribosomal_S10"/>
    <property type="match status" value="1"/>
</dbReference>
<dbReference type="PRINTS" id="PR00971">
    <property type="entry name" value="RIBOSOMALS10"/>
</dbReference>
<dbReference type="SMART" id="SM01403">
    <property type="entry name" value="Ribosomal_S10"/>
    <property type="match status" value="1"/>
</dbReference>
<dbReference type="SUPFAM" id="SSF54999">
    <property type="entry name" value="Ribosomal protein S10"/>
    <property type="match status" value="1"/>
</dbReference>
<dbReference type="PROSITE" id="PS00361">
    <property type="entry name" value="RIBOSOMAL_S10"/>
    <property type="match status" value="1"/>
</dbReference>
<reference key="1">
    <citation type="journal article" date="2006" name="Proc. Natl. Acad. Sci. U.S.A.">
        <title>The partitioned Rhizobium etli genome: genetic and metabolic redundancy in seven interacting replicons.</title>
        <authorList>
            <person name="Gonzalez V."/>
            <person name="Santamaria R.I."/>
            <person name="Bustos P."/>
            <person name="Hernandez-Gonzalez I."/>
            <person name="Medrano-Soto A."/>
            <person name="Moreno-Hagelsieb G."/>
            <person name="Janga S.C."/>
            <person name="Ramirez M.A."/>
            <person name="Jimenez-Jacinto V."/>
            <person name="Collado-Vides J."/>
            <person name="Davila G."/>
        </authorList>
    </citation>
    <scope>NUCLEOTIDE SEQUENCE [LARGE SCALE GENOMIC DNA]</scope>
    <source>
        <strain>ATCC 51251 / DSM 11541 / JCM 21823 / NBRC 15573 / CFN 42</strain>
    </source>
</reference>
<sequence>MNGQNIRIRLKAFDHRILDASTREIVSTAKRTGASVRGPVPLPTRIEKFTVNRSPHIDKKSREQFEMRTHKRLLDIVDPTPQTVDALMKLDLAAGVDVEIKL</sequence>
<keyword id="KW-1185">Reference proteome</keyword>
<keyword id="KW-0687">Ribonucleoprotein</keyword>
<keyword id="KW-0689">Ribosomal protein</keyword>
<feature type="chain" id="PRO_0000258563" description="Small ribosomal subunit protein uS10">
    <location>
        <begin position="1"/>
        <end position="102"/>
    </location>
</feature>
<proteinExistence type="inferred from homology"/>